<gene>
    <name evidence="1" type="primary">queC</name>
    <name type="ordered locus">BcerKBAB4_1256</name>
</gene>
<reference key="1">
    <citation type="journal article" date="2008" name="Chem. Biol. Interact.">
        <title>Extending the Bacillus cereus group genomics to putative food-borne pathogens of different toxicity.</title>
        <authorList>
            <person name="Lapidus A."/>
            <person name="Goltsman E."/>
            <person name="Auger S."/>
            <person name="Galleron N."/>
            <person name="Segurens B."/>
            <person name="Dossat C."/>
            <person name="Land M.L."/>
            <person name="Broussolle V."/>
            <person name="Brillard J."/>
            <person name="Guinebretiere M.-H."/>
            <person name="Sanchis V."/>
            <person name="Nguen-the C."/>
            <person name="Lereclus D."/>
            <person name="Richardson P."/>
            <person name="Wincker P."/>
            <person name="Weissenbach J."/>
            <person name="Ehrlich S.D."/>
            <person name="Sorokin A."/>
        </authorList>
    </citation>
    <scope>NUCLEOTIDE SEQUENCE [LARGE SCALE GENOMIC DNA]</scope>
    <source>
        <strain>KBAB4</strain>
    </source>
</reference>
<keyword id="KW-0067">ATP-binding</keyword>
<keyword id="KW-0436">Ligase</keyword>
<keyword id="KW-0479">Metal-binding</keyword>
<keyword id="KW-0547">Nucleotide-binding</keyword>
<keyword id="KW-0671">Queuosine biosynthesis</keyword>
<keyword id="KW-0862">Zinc</keyword>
<comment type="function">
    <text evidence="1">Catalyzes the ATP-dependent conversion of 7-carboxy-7-deazaguanine (CDG) to 7-cyano-7-deazaguanine (preQ(0)).</text>
</comment>
<comment type="catalytic activity">
    <reaction evidence="1">
        <text>7-carboxy-7-deazaguanine + NH4(+) + ATP = 7-cyano-7-deazaguanine + ADP + phosphate + H2O + H(+)</text>
        <dbReference type="Rhea" id="RHEA:27982"/>
        <dbReference type="ChEBI" id="CHEBI:15377"/>
        <dbReference type="ChEBI" id="CHEBI:15378"/>
        <dbReference type="ChEBI" id="CHEBI:28938"/>
        <dbReference type="ChEBI" id="CHEBI:30616"/>
        <dbReference type="ChEBI" id="CHEBI:43474"/>
        <dbReference type="ChEBI" id="CHEBI:45075"/>
        <dbReference type="ChEBI" id="CHEBI:61036"/>
        <dbReference type="ChEBI" id="CHEBI:456216"/>
        <dbReference type="EC" id="6.3.4.20"/>
    </reaction>
</comment>
<comment type="cofactor">
    <cofactor evidence="1">
        <name>Zn(2+)</name>
        <dbReference type="ChEBI" id="CHEBI:29105"/>
    </cofactor>
    <text evidence="1">Binds 1 zinc ion per subunit.</text>
</comment>
<comment type="pathway">
    <text evidence="1">Purine metabolism; 7-cyano-7-deazaguanine biosynthesis.</text>
</comment>
<comment type="subunit">
    <text evidence="1">Homodimer.</text>
</comment>
<comment type="similarity">
    <text evidence="1">Belongs to the QueC family.</text>
</comment>
<feature type="chain" id="PRO_1000186561" description="7-cyano-7-deazaguanine synthase">
    <location>
        <begin position="1"/>
        <end position="220"/>
    </location>
</feature>
<feature type="binding site" evidence="1">
    <location>
        <begin position="10"/>
        <end position="20"/>
    </location>
    <ligand>
        <name>ATP</name>
        <dbReference type="ChEBI" id="CHEBI:30616"/>
    </ligand>
</feature>
<feature type="binding site" evidence="1">
    <location>
        <position position="186"/>
    </location>
    <ligand>
        <name>Zn(2+)</name>
        <dbReference type="ChEBI" id="CHEBI:29105"/>
    </ligand>
</feature>
<feature type="binding site" evidence="1">
    <location>
        <position position="195"/>
    </location>
    <ligand>
        <name>Zn(2+)</name>
        <dbReference type="ChEBI" id="CHEBI:29105"/>
    </ligand>
</feature>
<feature type="binding site" evidence="1">
    <location>
        <position position="198"/>
    </location>
    <ligand>
        <name>Zn(2+)</name>
        <dbReference type="ChEBI" id="CHEBI:29105"/>
    </ligand>
</feature>
<feature type="binding site" evidence="1">
    <location>
        <position position="201"/>
    </location>
    <ligand>
        <name>Zn(2+)</name>
        <dbReference type="ChEBI" id="CHEBI:29105"/>
    </ligand>
</feature>
<accession>A9VKR8</accession>
<organism>
    <name type="scientific">Bacillus mycoides (strain KBAB4)</name>
    <name type="common">Bacillus weihenstephanensis</name>
    <dbReference type="NCBI Taxonomy" id="315730"/>
    <lineage>
        <taxon>Bacteria</taxon>
        <taxon>Bacillati</taxon>
        <taxon>Bacillota</taxon>
        <taxon>Bacilli</taxon>
        <taxon>Bacillales</taxon>
        <taxon>Bacillaceae</taxon>
        <taxon>Bacillus</taxon>
        <taxon>Bacillus cereus group</taxon>
    </lineage>
</organism>
<dbReference type="EC" id="6.3.4.20" evidence="1"/>
<dbReference type="EMBL" id="CP000903">
    <property type="protein sequence ID" value="ABY42503.1"/>
    <property type="molecule type" value="Genomic_DNA"/>
</dbReference>
<dbReference type="RefSeq" id="WP_002168840.1">
    <property type="nucleotide sequence ID" value="NC_010184.1"/>
</dbReference>
<dbReference type="SMR" id="A9VKR8"/>
<dbReference type="KEGG" id="bwe:BcerKBAB4_1256"/>
<dbReference type="eggNOG" id="COG0603">
    <property type="taxonomic scope" value="Bacteria"/>
</dbReference>
<dbReference type="HOGENOM" id="CLU_081854_0_0_9"/>
<dbReference type="UniPathway" id="UPA00391"/>
<dbReference type="Proteomes" id="UP000002154">
    <property type="component" value="Chromosome"/>
</dbReference>
<dbReference type="GO" id="GO:0005524">
    <property type="term" value="F:ATP binding"/>
    <property type="evidence" value="ECO:0007669"/>
    <property type="project" value="UniProtKB-UniRule"/>
</dbReference>
<dbReference type="GO" id="GO:0016879">
    <property type="term" value="F:ligase activity, forming carbon-nitrogen bonds"/>
    <property type="evidence" value="ECO:0007669"/>
    <property type="project" value="UniProtKB-UniRule"/>
</dbReference>
<dbReference type="GO" id="GO:0008270">
    <property type="term" value="F:zinc ion binding"/>
    <property type="evidence" value="ECO:0007669"/>
    <property type="project" value="UniProtKB-UniRule"/>
</dbReference>
<dbReference type="GO" id="GO:0008616">
    <property type="term" value="P:queuosine biosynthetic process"/>
    <property type="evidence" value="ECO:0007669"/>
    <property type="project" value="UniProtKB-UniRule"/>
</dbReference>
<dbReference type="CDD" id="cd01995">
    <property type="entry name" value="QueC-like"/>
    <property type="match status" value="1"/>
</dbReference>
<dbReference type="FunFam" id="3.40.50.620:FF:000017">
    <property type="entry name" value="7-cyano-7-deazaguanine synthase"/>
    <property type="match status" value="1"/>
</dbReference>
<dbReference type="Gene3D" id="3.40.50.620">
    <property type="entry name" value="HUPs"/>
    <property type="match status" value="1"/>
</dbReference>
<dbReference type="HAMAP" id="MF_01633">
    <property type="entry name" value="QueC"/>
    <property type="match status" value="1"/>
</dbReference>
<dbReference type="InterPro" id="IPR018317">
    <property type="entry name" value="QueC"/>
</dbReference>
<dbReference type="InterPro" id="IPR014729">
    <property type="entry name" value="Rossmann-like_a/b/a_fold"/>
</dbReference>
<dbReference type="NCBIfam" id="TIGR00364">
    <property type="entry name" value="7-cyano-7-deazaguanine synthase QueC"/>
    <property type="match status" value="1"/>
</dbReference>
<dbReference type="PANTHER" id="PTHR42914">
    <property type="entry name" value="7-CYANO-7-DEAZAGUANINE SYNTHASE"/>
    <property type="match status" value="1"/>
</dbReference>
<dbReference type="PANTHER" id="PTHR42914:SF1">
    <property type="entry name" value="7-CYANO-7-DEAZAGUANINE SYNTHASE"/>
    <property type="match status" value="1"/>
</dbReference>
<dbReference type="Pfam" id="PF06508">
    <property type="entry name" value="QueC"/>
    <property type="match status" value="1"/>
</dbReference>
<dbReference type="PIRSF" id="PIRSF006293">
    <property type="entry name" value="ExsB"/>
    <property type="match status" value="1"/>
</dbReference>
<dbReference type="SUPFAM" id="SSF52402">
    <property type="entry name" value="Adenine nucleotide alpha hydrolases-like"/>
    <property type="match status" value="1"/>
</dbReference>
<sequence>MKKEKAVVVFSGGQDSTTCLFWAIQQFEEVEAVTFNYNQRHKLEIDCAVEIAKELGIKHTILDMSLLNQLAPNALTRTDMEITHEEGELPSTFVDGRNLLFLSFAAVLAKQVGARHIVTGVCETDFSGYPDCRDVFVKSLNVTLNLSMDYPFVIHTPLMWIDKAETWKLSDELGAFEFVREKTLTCYNGIIGDGCGECPACQLRKAGLDTYLQEREGASN</sequence>
<evidence type="ECO:0000255" key="1">
    <source>
        <dbReference type="HAMAP-Rule" id="MF_01633"/>
    </source>
</evidence>
<proteinExistence type="inferred from homology"/>
<protein>
    <recommendedName>
        <fullName evidence="1">7-cyano-7-deazaguanine synthase</fullName>
        <ecNumber evidence="1">6.3.4.20</ecNumber>
    </recommendedName>
    <alternativeName>
        <fullName evidence="1">7-cyano-7-carbaguanine synthase</fullName>
    </alternativeName>
    <alternativeName>
        <fullName evidence="1">PreQ(0) synthase</fullName>
    </alternativeName>
    <alternativeName>
        <fullName evidence="1">Queuosine biosynthesis protein QueC</fullName>
    </alternativeName>
</protein>
<name>QUEC_BACMK</name>